<organism>
    <name type="scientific">Vibrio parahaemolyticus serotype O3:K6 (strain RIMD 2210633)</name>
    <dbReference type="NCBI Taxonomy" id="223926"/>
    <lineage>
        <taxon>Bacteria</taxon>
        <taxon>Pseudomonadati</taxon>
        <taxon>Pseudomonadota</taxon>
        <taxon>Gammaproteobacteria</taxon>
        <taxon>Vibrionales</taxon>
        <taxon>Vibrionaceae</taxon>
        <taxon>Vibrio</taxon>
    </lineage>
</organism>
<accession>Q87GY4</accession>
<gene>
    <name type="primary">tkt2</name>
    <name type="ordered locus">VPA1181</name>
</gene>
<comment type="function">
    <text evidence="1">Catalyzes the transfer of a two-carbon ketol group from a ketose donor to an aldose acceptor, via a covalent intermediate with the cofactor thiamine pyrophosphate.</text>
</comment>
<comment type="catalytic activity">
    <reaction>
        <text>D-sedoheptulose 7-phosphate + D-glyceraldehyde 3-phosphate = aldehydo-D-ribose 5-phosphate + D-xylulose 5-phosphate</text>
        <dbReference type="Rhea" id="RHEA:10508"/>
        <dbReference type="ChEBI" id="CHEBI:57483"/>
        <dbReference type="ChEBI" id="CHEBI:57737"/>
        <dbReference type="ChEBI" id="CHEBI:58273"/>
        <dbReference type="ChEBI" id="CHEBI:59776"/>
        <dbReference type="EC" id="2.2.1.1"/>
    </reaction>
</comment>
<comment type="cofactor">
    <cofactor evidence="1">
        <name>Mg(2+)</name>
        <dbReference type="ChEBI" id="CHEBI:18420"/>
    </cofactor>
    <cofactor evidence="1">
        <name>Ca(2+)</name>
        <dbReference type="ChEBI" id="CHEBI:29108"/>
    </cofactor>
    <cofactor evidence="1">
        <name>Mn(2+)</name>
        <dbReference type="ChEBI" id="CHEBI:29035"/>
    </cofactor>
    <cofactor evidence="1">
        <name>Co(2+)</name>
        <dbReference type="ChEBI" id="CHEBI:48828"/>
    </cofactor>
    <text evidence="1">Binds 1 Mg(2+) ion per subunit. Can also utilize other divalent metal cations, such as Ca(2+), Mn(2+) and Co(2+).</text>
</comment>
<comment type="cofactor">
    <cofactor evidence="1">
        <name>thiamine diphosphate</name>
        <dbReference type="ChEBI" id="CHEBI:58937"/>
    </cofactor>
    <text evidence="1">Binds 1 thiamine pyrophosphate per subunit.</text>
</comment>
<comment type="subunit">
    <text evidence="1">Homodimer.</text>
</comment>
<comment type="similarity">
    <text evidence="2">Belongs to the transketolase family.</text>
</comment>
<proteinExistence type="inferred from homology"/>
<dbReference type="EC" id="2.2.1.1"/>
<dbReference type="EMBL" id="BA000032">
    <property type="protein sequence ID" value="BAC62524.1"/>
    <property type="molecule type" value="Genomic_DNA"/>
</dbReference>
<dbReference type="RefSeq" id="NP_800691.1">
    <property type="nucleotide sequence ID" value="NC_004605.1"/>
</dbReference>
<dbReference type="SMR" id="Q87GY4"/>
<dbReference type="GeneID" id="1191877"/>
<dbReference type="KEGG" id="vpa:VPA1181"/>
<dbReference type="PATRIC" id="fig|223926.6.peg.4107"/>
<dbReference type="eggNOG" id="COG0021">
    <property type="taxonomic scope" value="Bacteria"/>
</dbReference>
<dbReference type="HOGENOM" id="CLU_009227_0_0_6"/>
<dbReference type="Proteomes" id="UP000002493">
    <property type="component" value="Chromosome 2"/>
</dbReference>
<dbReference type="GO" id="GO:0005829">
    <property type="term" value="C:cytosol"/>
    <property type="evidence" value="ECO:0007669"/>
    <property type="project" value="TreeGrafter"/>
</dbReference>
<dbReference type="GO" id="GO:0046872">
    <property type="term" value="F:metal ion binding"/>
    <property type="evidence" value="ECO:0007669"/>
    <property type="project" value="UniProtKB-KW"/>
</dbReference>
<dbReference type="GO" id="GO:0004802">
    <property type="term" value="F:transketolase activity"/>
    <property type="evidence" value="ECO:0007669"/>
    <property type="project" value="UniProtKB-EC"/>
</dbReference>
<dbReference type="GO" id="GO:0006098">
    <property type="term" value="P:pentose-phosphate shunt"/>
    <property type="evidence" value="ECO:0007669"/>
    <property type="project" value="TreeGrafter"/>
</dbReference>
<dbReference type="CDD" id="cd07033">
    <property type="entry name" value="TPP_PYR_DXS_TK_like"/>
    <property type="match status" value="1"/>
</dbReference>
<dbReference type="CDD" id="cd02012">
    <property type="entry name" value="TPP_TK"/>
    <property type="match status" value="1"/>
</dbReference>
<dbReference type="FunFam" id="3.40.50.920:FF:000003">
    <property type="entry name" value="Transketolase"/>
    <property type="match status" value="1"/>
</dbReference>
<dbReference type="FunFam" id="3.40.50.970:FF:000003">
    <property type="entry name" value="Transketolase"/>
    <property type="match status" value="1"/>
</dbReference>
<dbReference type="FunFam" id="3.40.50.970:FF:000004">
    <property type="entry name" value="Transketolase"/>
    <property type="match status" value="1"/>
</dbReference>
<dbReference type="Gene3D" id="3.40.50.920">
    <property type="match status" value="1"/>
</dbReference>
<dbReference type="Gene3D" id="3.40.50.970">
    <property type="match status" value="2"/>
</dbReference>
<dbReference type="InterPro" id="IPR029061">
    <property type="entry name" value="THDP-binding"/>
</dbReference>
<dbReference type="InterPro" id="IPR009014">
    <property type="entry name" value="Transketo_C/PFOR_II"/>
</dbReference>
<dbReference type="InterPro" id="IPR055152">
    <property type="entry name" value="Transketolase-like_C_2"/>
</dbReference>
<dbReference type="InterPro" id="IPR005475">
    <property type="entry name" value="Transketolase-like_Pyr-bd"/>
</dbReference>
<dbReference type="InterPro" id="IPR005478">
    <property type="entry name" value="Transketolase_bac-like"/>
</dbReference>
<dbReference type="InterPro" id="IPR020826">
    <property type="entry name" value="Transketolase_BS"/>
</dbReference>
<dbReference type="InterPro" id="IPR049557">
    <property type="entry name" value="Transketolase_CS"/>
</dbReference>
<dbReference type="InterPro" id="IPR033247">
    <property type="entry name" value="Transketolase_fam"/>
</dbReference>
<dbReference type="InterPro" id="IPR005474">
    <property type="entry name" value="Transketolase_N"/>
</dbReference>
<dbReference type="NCBIfam" id="TIGR00232">
    <property type="entry name" value="tktlase_bact"/>
    <property type="match status" value="1"/>
</dbReference>
<dbReference type="PANTHER" id="PTHR43522">
    <property type="entry name" value="TRANSKETOLASE"/>
    <property type="match status" value="1"/>
</dbReference>
<dbReference type="PANTHER" id="PTHR43522:SF2">
    <property type="entry name" value="TRANSKETOLASE 1-RELATED"/>
    <property type="match status" value="1"/>
</dbReference>
<dbReference type="Pfam" id="PF02779">
    <property type="entry name" value="Transket_pyr"/>
    <property type="match status" value="1"/>
</dbReference>
<dbReference type="Pfam" id="PF22613">
    <property type="entry name" value="Transketolase_C_1"/>
    <property type="match status" value="1"/>
</dbReference>
<dbReference type="Pfam" id="PF00456">
    <property type="entry name" value="Transketolase_N"/>
    <property type="match status" value="1"/>
</dbReference>
<dbReference type="SMART" id="SM00861">
    <property type="entry name" value="Transket_pyr"/>
    <property type="match status" value="1"/>
</dbReference>
<dbReference type="SUPFAM" id="SSF52518">
    <property type="entry name" value="Thiamin diphosphate-binding fold (THDP-binding)"/>
    <property type="match status" value="2"/>
</dbReference>
<dbReference type="SUPFAM" id="SSF52922">
    <property type="entry name" value="TK C-terminal domain-like"/>
    <property type="match status" value="1"/>
</dbReference>
<dbReference type="PROSITE" id="PS00801">
    <property type="entry name" value="TRANSKETOLASE_1"/>
    <property type="match status" value="1"/>
</dbReference>
<dbReference type="PROSITE" id="PS00802">
    <property type="entry name" value="TRANSKETOLASE_2"/>
    <property type="match status" value="1"/>
</dbReference>
<keyword id="KW-0106">Calcium</keyword>
<keyword id="KW-0460">Magnesium</keyword>
<keyword id="KW-0479">Metal-binding</keyword>
<keyword id="KW-0786">Thiamine pyrophosphate</keyword>
<keyword id="KW-0808">Transferase</keyword>
<name>TKT2_VIBPA</name>
<protein>
    <recommendedName>
        <fullName>Transketolase 2</fullName>
        <shortName>TK 2</shortName>
        <ecNumber>2.2.1.1</ecNumber>
    </recommendedName>
</protein>
<evidence type="ECO:0000250" key="1"/>
<evidence type="ECO:0000305" key="2"/>
<reference key="1">
    <citation type="journal article" date="2003" name="Lancet">
        <title>Genome sequence of Vibrio parahaemolyticus: a pathogenic mechanism distinct from that of V. cholerae.</title>
        <authorList>
            <person name="Makino K."/>
            <person name="Oshima K."/>
            <person name="Kurokawa K."/>
            <person name="Yokoyama K."/>
            <person name="Uda T."/>
            <person name="Tagomori K."/>
            <person name="Iijima Y."/>
            <person name="Najima M."/>
            <person name="Nakano M."/>
            <person name="Yamashita A."/>
            <person name="Kubota Y."/>
            <person name="Kimura S."/>
            <person name="Yasunaga T."/>
            <person name="Honda T."/>
            <person name="Shinagawa H."/>
            <person name="Hattori M."/>
            <person name="Iida T."/>
        </authorList>
    </citation>
    <scope>NUCLEOTIDE SEQUENCE [LARGE SCALE GENOMIC DNA]</scope>
    <source>
        <strain>RIMD 2210633</strain>
    </source>
</reference>
<sequence length="663" mass="72024">MDRKYLANAIRALSMDGVQQANSGHPGAPMGMADIAEVLWRSHLNHNPSNPEWADRDRFVLSNGHGSMLIYSLLHLSGYELSIDDLKNFRQLHSKTPGHPEYGYAPGIETTTGPLGQGITNAVGMAMAEKALAAQFNKEGHDIVDHFTYVFMGDGCLMEGISHEACSLAGTLGLGKLIAFWDDNGISIDGHVEGWFSDDTPKRFEAYGWHVIPAVDGHDADAINAAIEAAKADPRPTLICTKTIIGFGSPNKSGSHDCHGAPLGAEEIAATRKELGWEHGPFEIPQEVYAEWSAKETGAAKEAAWNEKFAAYEAAYPELAAEFKRRVNGELPAEWEEKASQIIADLQANPANIASRKASQNALEAFGALLPEFMGGSADLAPSNLTMWSGSKSLEANDFSGNYIHYGVREFGMTAIMNGIALHGGFVPYGATFLMFMEYARNAMRMAALMKIQNIQVYTHDSIGLGEDGPTHQPVEQIASLRLTPNMNTWRPCDQVESAVAWKLAIERKDAPTALIFSRQNLAQQPRSAEQVADIAKGGYILKDSEGKPELILIATGSEVELAVKAAEQLTAEGKKVRVVSMPSTDAFDKQDADYREAVLPSDVTARIAIEAGIADFWYKYVGFDGRIIGMTTFGESAPADQLFEMFGFTVENVVNTAKELLA</sequence>
<feature type="chain" id="PRO_0000191885" description="Transketolase 2">
    <location>
        <begin position="1"/>
        <end position="663"/>
    </location>
</feature>
<feature type="active site" description="Proton donor" evidence="1">
    <location>
        <position position="410"/>
    </location>
</feature>
<feature type="binding site" evidence="1">
    <location>
        <position position="25"/>
    </location>
    <ligand>
        <name>substrate</name>
    </ligand>
</feature>
<feature type="binding site" evidence="1">
    <location>
        <position position="65"/>
    </location>
    <ligand>
        <name>thiamine diphosphate</name>
        <dbReference type="ChEBI" id="CHEBI:58937"/>
    </ligand>
</feature>
<feature type="binding site" evidence="1">
    <location>
        <begin position="113"/>
        <end position="115"/>
    </location>
    <ligand>
        <name>thiamine diphosphate</name>
        <dbReference type="ChEBI" id="CHEBI:58937"/>
    </ligand>
</feature>
<feature type="binding site" evidence="1">
    <location>
        <position position="154"/>
    </location>
    <ligand>
        <name>Mg(2+)</name>
        <dbReference type="ChEBI" id="CHEBI:18420"/>
    </ligand>
</feature>
<feature type="binding site" evidence="1">
    <location>
        <position position="155"/>
    </location>
    <ligand>
        <name>thiamine diphosphate</name>
        <dbReference type="ChEBI" id="CHEBI:58937"/>
    </ligand>
</feature>
<feature type="binding site" evidence="1">
    <location>
        <position position="184"/>
    </location>
    <ligand>
        <name>Mg(2+)</name>
        <dbReference type="ChEBI" id="CHEBI:18420"/>
    </ligand>
</feature>
<feature type="binding site" evidence="1">
    <location>
        <position position="184"/>
    </location>
    <ligand>
        <name>thiamine diphosphate</name>
        <dbReference type="ChEBI" id="CHEBI:58937"/>
    </ligand>
</feature>
<feature type="binding site" evidence="1">
    <location>
        <position position="186"/>
    </location>
    <ligand>
        <name>Mg(2+)</name>
        <dbReference type="ChEBI" id="CHEBI:18420"/>
    </ligand>
</feature>
<feature type="binding site" evidence="1">
    <location>
        <position position="259"/>
    </location>
    <ligand>
        <name>substrate</name>
    </ligand>
</feature>
<feature type="binding site" evidence="1">
    <location>
        <position position="259"/>
    </location>
    <ligand>
        <name>thiamine diphosphate</name>
        <dbReference type="ChEBI" id="CHEBI:58937"/>
    </ligand>
</feature>
<feature type="binding site" evidence="1">
    <location>
        <position position="356"/>
    </location>
    <ligand>
        <name>substrate</name>
    </ligand>
</feature>
<feature type="binding site" evidence="1">
    <location>
        <position position="383"/>
    </location>
    <ligand>
        <name>substrate</name>
    </ligand>
</feature>
<feature type="binding site" evidence="1">
    <location>
        <position position="436"/>
    </location>
    <ligand>
        <name>thiamine diphosphate</name>
        <dbReference type="ChEBI" id="CHEBI:58937"/>
    </ligand>
</feature>
<feature type="binding site" evidence="1">
    <location>
        <position position="460"/>
    </location>
    <ligand>
        <name>substrate</name>
    </ligand>
</feature>
<feature type="binding site" evidence="1">
    <location>
        <position position="468"/>
    </location>
    <ligand>
        <name>substrate</name>
    </ligand>
</feature>
<feature type="binding site" evidence="1">
    <location>
        <position position="519"/>
    </location>
    <ligand>
        <name>substrate</name>
    </ligand>
</feature>
<feature type="site" description="Important for catalytic activity" evidence="1">
    <location>
        <position position="25"/>
    </location>
</feature>
<feature type="site" description="Important for catalytic activity" evidence="1">
    <location>
        <position position="259"/>
    </location>
</feature>